<gene>
    <name evidence="8" type="primary">PPO1</name>
    <name evidence="10" type="synonym">proPO-I</name>
</gene>
<keyword id="KW-0186">Copper</keyword>
<keyword id="KW-0903">Direct protein sequencing</keyword>
<keyword id="KW-1015">Disulfide bond</keyword>
<keyword id="KW-0325">Glycoprotein</keyword>
<keyword id="KW-0391">Immunity</keyword>
<keyword id="KW-0399">Innate immunity</keyword>
<keyword id="KW-0470">Melanin biosynthesis</keyword>
<keyword id="KW-0479">Metal-binding</keyword>
<keyword id="KW-0503">Monooxygenase</keyword>
<keyword id="KW-0560">Oxidoreductase</keyword>
<keyword id="KW-0964">Secreted</keyword>
<keyword id="KW-0865">Zymogen</keyword>
<dbReference type="EC" id="1.14.18.-" evidence="5"/>
<dbReference type="EMBL" id="AB079665">
    <property type="protein sequence ID" value="BAC15603.1"/>
    <property type="molecule type" value="mRNA"/>
</dbReference>
<dbReference type="SMR" id="Q8I6K1"/>
<dbReference type="ELM" id="Q8I6K1"/>
<dbReference type="GlyCosmos" id="Q8I6K1">
    <property type="glycosylation" value="6 sites, No reported glycans"/>
</dbReference>
<dbReference type="GO" id="GO:0005576">
    <property type="term" value="C:extracellular region"/>
    <property type="evidence" value="ECO:0007669"/>
    <property type="project" value="UniProtKB-SubCell"/>
</dbReference>
<dbReference type="GO" id="GO:0046872">
    <property type="term" value="F:metal ion binding"/>
    <property type="evidence" value="ECO:0007669"/>
    <property type="project" value="UniProtKB-KW"/>
</dbReference>
<dbReference type="GO" id="GO:0004503">
    <property type="term" value="F:tyrosinase activity"/>
    <property type="evidence" value="ECO:0007669"/>
    <property type="project" value="UniProtKB-ARBA"/>
</dbReference>
<dbReference type="GO" id="GO:0045087">
    <property type="term" value="P:innate immune response"/>
    <property type="evidence" value="ECO:0007669"/>
    <property type="project" value="UniProtKB-KW"/>
</dbReference>
<dbReference type="GO" id="GO:0042438">
    <property type="term" value="P:melanin biosynthetic process"/>
    <property type="evidence" value="ECO:0007669"/>
    <property type="project" value="UniProtKB-KW"/>
</dbReference>
<dbReference type="FunFam" id="1.10.1280.10:FF:000004">
    <property type="entry name" value="Hemocyanin subunit 2"/>
    <property type="match status" value="1"/>
</dbReference>
<dbReference type="FunFam" id="2.60.40.1520:FF:000001">
    <property type="entry name" value="Hemocyanin subunit 2"/>
    <property type="match status" value="1"/>
</dbReference>
<dbReference type="Gene3D" id="1.10.1280.10">
    <property type="entry name" value="Di-copper center containing domain from catechol oxidase"/>
    <property type="match status" value="1"/>
</dbReference>
<dbReference type="Gene3D" id="2.60.40.1520">
    <property type="entry name" value="Hemocyanin, C-terminal domain"/>
    <property type="match status" value="1"/>
</dbReference>
<dbReference type="Gene3D" id="1.20.1370.10">
    <property type="entry name" value="Hemocyanin, N-terminal domain"/>
    <property type="match status" value="1"/>
</dbReference>
<dbReference type="InterPro" id="IPR008922">
    <property type="entry name" value="Di-copper_centre_dom_sf"/>
</dbReference>
<dbReference type="InterPro" id="IPR013788">
    <property type="entry name" value="Hemocyanin/hexamerin"/>
</dbReference>
<dbReference type="InterPro" id="IPR000896">
    <property type="entry name" value="Hemocyanin/hexamerin_mid_dom"/>
</dbReference>
<dbReference type="InterPro" id="IPR005203">
    <property type="entry name" value="Hemocyanin_C"/>
</dbReference>
<dbReference type="InterPro" id="IPR037020">
    <property type="entry name" value="Hemocyanin_C_sf"/>
</dbReference>
<dbReference type="InterPro" id="IPR005204">
    <property type="entry name" value="Hemocyanin_N"/>
</dbReference>
<dbReference type="InterPro" id="IPR036697">
    <property type="entry name" value="Hemocyanin_N_sf"/>
</dbReference>
<dbReference type="InterPro" id="IPR014756">
    <property type="entry name" value="Ig_E-set"/>
</dbReference>
<dbReference type="InterPro" id="IPR002227">
    <property type="entry name" value="Tyrosinase_Cu-bd"/>
</dbReference>
<dbReference type="PANTHER" id="PTHR11511">
    <property type="entry name" value="LARVAL STORAGE PROTEIN/PHENOLOXIDASE"/>
    <property type="match status" value="1"/>
</dbReference>
<dbReference type="PANTHER" id="PTHR11511:SF4">
    <property type="entry name" value="PHENOLOXIDASE 2-RELATED"/>
    <property type="match status" value="1"/>
</dbReference>
<dbReference type="Pfam" id="PF03723">
    <property type="entry name" value="Hemocyanin_C"/>
    <property type="match status" value="1"/>
</dbReference>
<dbReference type="Pfam" id="PF00372">
    <property type="entry name" value="Hemocyanin_M"/>
    <property type="match status" value="1"/>
</dbReference>
<dbReference type="Pfam" id="PF03722">
    <property type="entry name" value="Hemocyanin_N"/>
    <property type="match status" value="1"/>
</dbReference>
<dbReference type="PRINTS" id="PR00187">
    <property type="entry name" value="HAEMOCYANIN"/>
</dbReference>
<dbReference type="SUPFAM" id="SSF48056">
    <property type="entry name" value="Di-copper centre-containing domain"/>
    <property type="match status" value="1"/>
</dbReference>
<dbReference type="SUPFAM" id="SSF81296">
    <property type="entry name" value="E set domains"/>
    <property type="match status" value="1"/>
</dbReference>
<dbReference type="SUPFAM" id="SSF48050">
    <property type="entry name" value="Hemocyanin, N-terminal domain"/>
    <property type="match status" value="1"/>
</dbReference>
<dbReference type="PROSITE" id="PS00209">
    <property type="entry name" value="HEMOCYANIN_1"/>
    <property type="match status" value="1"/>
</dbReference>
<dbReference type="PROSITE" id="PS00210">
    <property type="entry name" value="HEMOCYANIN_2"/>
    <property type="match status" value="1"/>
</dbReference>
<dbReference type="PROSITE" id="PS00498">
    <property type="entry name" value="TYROSINASE_2"/>
    <property type="match status" value="1"/>
</dbReference>
<comment type="function">
    <text evidence="1 2">This is a copper-containing oxidase that functions in the formation of pigments such as melanins and other polyphenolic compounds. Catalyzes the oxidation of o-diphenols (N-acetyldopamine, 4-methylcatechol and dopamine). Cannot oxidize monophenols and p-phenols (L-tyrosine, tyramine, gentisic acid and hydroquinone). Binds to the surface of hemocytes and is involved in hemocyte melanization. Activation of the enzyme in response to bacterial lipopolysaccharides (LPS) suggests it may play a role in innate immunity.</text>
</comment>
<comment type="cofactor">
    <cofactor evidence="1">
        <name>Cu(2+)</name>
        <dbReference type="ChEBI" id="CHEBI:29036"/>
    </cofactor>
    <text evidence="1">Binds 2 copper ions per subunit.</text>
</comment>
<comment type="subunit">
    <text evidence="6 7">Dimer (PubMed:9085271). Might form a homodimer or a heterodimer with PPO1 (PubMed:9085271). Might interact with PPAF2 (via CLIP domain); the interaction might be required for PPO1 activity (PubMed:16362048).</text>
</comment>
<comment type="subcellular location">
    <subcellularLocation>
        <location evidence="7">Secreted</location>
    </subcellularLocation>
    <text evidence="7">Secreted in the hemolymph.</text>
</comment>
<comment type="tissue specificity">
    <text evidence="5">Hemocytes.</text>
</comment>
<comment type="developmental stage">
    <text evidence="7">Expressed in larvae (at protein level).</text>
</comment>
<comment type="PTM">
    <text evidence="5">Propeptide cleaved by PPAF1.</text>
</comment>
<comment type="similarity">
    <text evidence="8">Belongs to the tyrosinase family.</text>
</comment>
<comment type="caution">
    <text evidence="8">The sequence was deposited erroneously as PPO2 (PubMed:12185078).</text>
</comment>
<accession>Q8I6K1</accession>
<reference evidence="10" key="1">
    <citation type="journal article" date="2002" name="J. Biol. Chem.">
        <title>A new easter-type serine protease cleaves a masquerade-like protein during prophenoloxidase activation in Holotrichia diomphalia larvae.</title>
        <authorList>
            <person name="Kim M.S."/>
            <person name="Baek M.J."/>
            <person name="Lee M.H."/>
            <person name="Park J.W."/>
            <person name="Lee S.Y."/>
            <person name="Soderhall K."/>
            <person name="Lee B.L."/>
        </authorList>
    </citation>
    <scope>NUCLEOTIDE SEQUENCE [MRNA]</scope>
    <scope>PROTEIN SEQUENCE OF 51-60 AND 163-172</scope>
    <scope>TISSUE SPECIFICITY</scope>
    <scope>PROTEOLYTIC CLEAVAGE</scope>
</reference>
<reference evidence="8" key="2">
    <citation type="journal article" date="1997" name="Mol. Cells">
        <title>Purification and characterization of prophenoloxidase from the hemolymph of coleopteran insect, Holotrichia diomphalia larvae.</title>
        <authorList>
            <person name="Kwon T.H."/>
            <person name="Lee S.Y."/>
            <person name="Lee J.H."/>
            <person name="Choi J.S."/>
            <person name="Kawabata S."/>
            <person name="Iwanaga S."/>
            <person name="Lee B.L."/>
        </authorList>
    </citation>
    <scope>SUBUNIT</scope>
    <scope>SUBCELLULAR LOCATION</scope>
    <scope>DEVELOPMENTAL STAGE</scope>
</reference>
<reference evidence="8" key="3">
    <citation type="journal article" date="2005" name="EMBO J.">
        <title>Crystal structure of a clip-domain serine protease and functional roles of the clip domains.</title>
        <authorList>
            <person name="Piao S."/>
            <person name="Song Y.L."/>
            <person name="Kim J.H."/>
            <person name="Park S.Y."/>
            <person name="Park J.W."/>
            <person name="Lee B.L."/>
            <person name="Oh B.H."/>
            <person name="Ha N.C."/>
        </authorList>
    </citation>
    <scope>INTERACTION WITH PPAF2</scope>
    <scope>PROTEOLYTIC CLEAVAGE</scope>
</reference>
<organism evidence="10">
    <name type="scientific">Holotrichia diomphalia</name>
    <name type="common">Korean black chafer</name>
    <dbReference type="NCBI Taxonomy" id="33394"/>
    <lineage>
        <taxon>Eukaryota</taxon>
        <taxon>Metazoa</taxon>
        <taxon>Ecdysozoa</taxon>
        <taxon>Arthropoda</taxon>
        <taxon>Hexapoda</taxon>
        <taxon>Insecta</taxon>
        <taxon>Pterygota</taxon>
        <taxon>Neoptera</taxon>
        <taxon>Endopterygota</taxon>
        <taxon>Coleoptera</taxon>
        <taxon>Polyphaga</taxon>
        <taxon>Scarabaeiformia</taxon>
        <taxon>Scarabaeidae</taxon>
        <taxon>Melolonthinae</taxon>
        <taxon>Holotrichia</taxon>
    </lineage>
</organism>
<proteinExistence type="evidence at protein level"/>
<sequence length="684" mass="79073">MSDKNKLLLLFDRPLETVIVPRGPDQEAFDVPVDLLSDRYKAIGVQVSNRFGEETKSKIPVKKISPPPLGEILDLPRQANFSLFIPKHRKIAGRLINIFLGMKDTDDLQSMAIFARERVNPYLFNYCFSVAILHRPDTQDLDIPSFIQTFPDKYLDSQVFSRAREEATLVPEGQRVPIEIPRDYTASDLEVEHRVAYFREDLGINLHHWHWHLVYPFEGAEQVVRKDRRGELFYYMHQQVIARYNLERFCNALKRVTRFTEWKDPIPEAYFPKLDSLVASRAWPARVTDQKLSNLRRDQDQITQDVDDLYRWRDRIYEAIHSGFVQTDGGGRQELTEFGGIDILGNIVESSNLSVNRTLYGDLHNMGHVFISYIHDPDHRHLETFGVMGDSATAMRDPVFYRWHAYIDDLFQQFKGSLPRYTEEQLNYPGITVTGVSVQSQGGAANTLNTFWQQSDVDMSRGMDFQPRGSVFARFTHLNHQPFAYNITVNNASGGNKRGTCRIFLGPKTDERRTAWLFKDQRLLFIELDRFVVNLRQGENTITRNSTESSVTIPFERTFRNLDLSRPVGGEALAQFNFCGCGWPQHMLIPKGTPEGYDCQLFVMISNFDDDQVVQSTEGICNDAMSYCGIKDRLYPDKRSMGYPFDRLPRNNVNTLQEFLTPNMRVQDCVIKFTDRVVVPRPRN</sequence>
<protein>
    <recommendedName>
        <fullName evidence="8">Phenoloxidase 1</fullName>
        <ecNumber evidence="5">1.14.18.-</ecNumber>
    </recommendedName>
    <alternativeName>
        <fullName evidence="10">Prophenoloxidase-I</fullName>
    </alternativeName>
</protein>
<feature type="propeptide" id="PRO_0000443312" description="Removed by PPAF1" evidence="5">
    <location>
        <begin position="1"/>
        <end position="50"/>
    </location>
</feature>
<feature type="chain" id="PRO_0000443313" description="Phenoloxidase 1" evidence="9">
    <location>
        <begin position="51"/>
        <end position="684"/>
    </location>
</feature>
<feature type="active site" description="Proton acceptor" evidence="3">
    <location>
        <position position="349"/>
    </location>
</feature>
<feature type="binding site" evidence="1">
    <location>
        <position position="208"/>
    </location>
    <ligand>
        <name>Cu cation</name>
        <dbReference type="ChEBI" id="CHEBI:23378"/>
        <label>A</label>
    </ligand>
</feature>
<feature type="binding site" evidence="1">
    <location>
        <position position="212"/>
    </location>
    <ligand>
        <name>Cu cation</name>
        <dbReference type="ChEBI" id="CHEBI:23378"/>
        <label>A</label>
    </ligand>
</feature>
<feature type="binding site" evidence="1">
    <location>
        <position position="237"/>
    </location>
    <ligand>
        <name>Cu cation</name>
        <dbReference type="ChEBI" id="CHEBI:23378"/>
        <label>A</label>
    </ligand>
</feature>
<feature type="binding site" evidence="1">
    <location>
        <position position="364"/>
    </location>
    <ligand>
        <name>Cu cation</name>
        <dbReference type="ChEBI" id="CHEBI:23378"/>
        <label>B</label>
    </ligand>
</feature>
<feature type="binding site" evidence="1">
    <location>
        <position position="368"/>
    </location>
    <ligand>
        <name>Cu cation</name>
        <dbReference type="ChEBI" id="CHEBI:23378"/>
        <label>B</label>
    </ligand>
</feature>
<feature type="binding site" evidence="1">
    <location>
        <position position="404"/>
    </location>
    <ligand>
        <name>Cu cation</name>
        <dbReference type="ChEBI" id="CHEBI:23378"/>
        <label>B</label>
    </ligand>
</feature>
<feature type="glycosylation site" description="N-linked (GlcNAc...) asparagine" evidence="4">
    <location>
        <position position="80"/>
    </location>
</feature>
<feature type="glycosylation site" description="N-linked (GlcNAc...) asparagine" evidence="4">
    <location>
        <position position="352"/>
    </location>
</feature>
<feature type="glycosylation site" description="N-linked (GlcNAc...) asparagine" evidence="4">
    <location>
        <position position="356"/>
    </location>
</feature>
<feature type="glycosylation site" description="N-linked (GlcNAc...) asparagine" evidence="4">
    <location>
        <position position="486"/>
    </location>
</feature>
<feature type="glycosylation site" description="N-linked (GlcNAc...) asparagine" evidence="4">
    <location>
        <position position="491"/>
    </location>
</feature>
<feature type="glycosylation site" description="N-linked (GlcNAc...) asparagine" evidence="4">
    <location>
        <position position="545"/>
    </location>
</feature>
<feature type="disulfide bond" evidence="1">
    <location>
        <begin position="579"/>
        <end position="621"/>
    </location>
</feature>
<feature type="disulfide bond" evidence="1">
    <location>
        <begin position="581"/>
        <end position="628"/>
    </location>
</feature>
<evidence type="ECO:0000250" key="1">
    <source>
        <dbReference type="UniProtKB" id="O44249"/>
    </source>
</evidence>
<evidence type="ECO:0000250" key="2">
    <source>
        <dbReference type="UniProtKB" id="Q8I6K2"/>
    </source>
</evidence>
<evidence type="ECO:0000250" key="3">
    <source>
        <dbReference type="UniProtKB" id="Q8MZM3"/>
    </source>
</evidence>
<evidence type="ECO:0000255" key="4">
    <source>
        <dbReference type="PROSITE-ProRule" id="PRU00498"/>
    </source>
</evidence>
<evidence type="ECO:0000269" key="5">
    <source>
    </source>
</evidence>
<evidence type="ECO:0000269" key="6">
    <source>
    </source>
</evidence>
<evidence type="ECO:0000269" key="7">
    <source>
    </source>
</evidence>
<evidence type="ECO:0000305" key="8"/>
<evidence type="ECO:0000305" key="9">
    <source>
    </source>
</evidence>
<evidence type="ECO:0000312" key="10">
    <source>
        <dbReference type="EMBL" id="BAC15603.1"/>
    </source>
</evidence>
<name>PPO1_HOLDI</name>